<evidence type="ECO:0000255" key="1">
    <source>
        <dbReference type="HAMAP-Rule" id="MF_01078"/>
    </source>
</evidence>
<dbReference type="EC" id="3.1.26.5" evidence="1"/>
<dbReference type="EMBL" id="AP006878">
    <property type="protein sequence ID" value="BAD85614.1"/>
    <property type="molecule type" value="Genomic_DNA"/>
</dbReference>
<dbReference type="RefSeq" id="WP_011250376.1">
    <property type="nucleotide sequence ID" value="NC_006624.1"/>
</dbReference>
<dbReference type="SMR" id="Q5JH27"/>
<dbReference type="STRING" id="69014.TK1425"/>
<dbReference type="EnsemblBacteria" id="BAD85614">
    <property type="protein sequence ID" value="BAD85614"/>
    <property type="gene ID" value="TK1425"/>
</dbReference>
<dbReference type="GeneID" id="78447946"/>
<dbReference type="KEGG" id="tko:TK1425"/>
<dbReference type="PATRIC" id="fig|69014.16.peg.1386"/>
<dbReference type="eggNOG" id="arCOG00720">
    <property type="taxonomic scope" value="Archaea"/>
</dbReference>
<dbReference type="HOGENOM" id="CLU_109672_0_0_2"/>
<dbReference type="InParanoid" id="Q5JH27"/>
<dbReference type="OrthoDB" id="95197at2157"/>
<dbReference type="PhylomeDB" id="Q5JH27"/>
<dbReference type="Proteomes" id="UP000000536">
    <property type="component" value="Chromosome"/>
</dbReference>
<dbReference type="GO" id="GO:0004526">
    <property type="term" value="F:ribonuclease P activity"/>
    <property type="evidence" value="ECO:0007669"/>
    <property type="project" value="UniProtKB-UniRule"/>
</dbReference>
<dbReference type="GO" id="GO:0001682">
    <property type="term" value="P:tRNA 5'-leader removal"/>
    <property type="evidence" value="ECO:0007669"/>
    <property type="project" value="UniProtKB-UniRule"/>
</dbReference>
<dbReference type="CDD" id="cd18691">
    <property type="entry name" value="PIN_VapC-like"/>
    <property type="match status" value="1"/>
</dbReference>
<dbReference type="HAMAP" id="MF_01078">
    <property type="entry name" value="RNA_free_RNase_P"/>
    <property type="match status" value="1"/>
</dbReference>
<dbReference type="InterPro" id="IPR029060">
    <property type="entry name" value="PIN-like_dom_sf"/>
</dbReference>
<dbReference type="InterPro" id="IPR014856">
    <property type="entry name" value="RNA_free_RNase_P"/>
</dbReference>
<dbReference type="NCBIfam" id="NF003342">
    <property type="entry name" value="PRK04358.1-3"/>
    <property type="match status" value="1"/>
</dbReference>
<dbReference type="NCBIfam" id="TIGR03875">
    <property type="entry name" value="RNA_lig_partner"/>
    <property type="match status" value="1"/>
</dbReference>
<dbReference type="PANTHER" id="PTHR41173:SF1">
    <property type="entry name" value="RNA-FREE RIBONUCLEASE P"/>
    <property type="match status" value="1"/>
</dbReference>
<dbReference type="PANTHER" id="PTHR41173">
    <property type="entry name" value="UPF0278 PROTEIN TK1425"/>
    <property type="match status" value="1"/>
</dbReference>
<dbReference type="Pfam" id="PF08745">
    <property type="entry name" value="PIN_5"/>
    <property type="match status" value="1"/>
</dbReference>
<dbReference type="SUPFAM" id="SSF88723">
    <property type="entry name" value="PIN domain-like"/>
    <property type="match status" value="1"/>
</dbReference>
<keyword id="KW-0255">Endonuclease</keyword>
<keyword id="KW-0378">Hydrolase</keyword>
<keyword id="KW-0540">Nuclease</keyword>
<keyword id="KW-1185">Reference proteome</keyword>
<keyword id="KW-0819">tRNA processing</keyword>
<protein>
    <recommendedName>
        <fullName evidence="1">RNA-free ribonuclease P</fullName>
        <shortName evidence="1">RNA-free RNase P</shortName>
        <ecNumber evidence="1">3.1.26.5</ecNumber>
    </recommendedName>
    <alternativeName>
        <fullName evidence="1">Protein-only RNase P</fullName>
    </alternativeName>
</protein>
<proteinExistence type="inferred from homology"/>
<accession>Q5JH27</accession>
<comment type="function">
    <text evidence="1">RNA-free RNase P that catalyzes the removal of the 5'-leader sequence from pre-tRNA to produce the mature 5'-terminus.</text>
</comment>
<comment type="catalytic activity">
    <reaction evidence="1">
        <text>Endonucleolytic cleavage of RNA, removing 5'-extranucleotides from tRNA precursor.</text>
        <dbReference type="EC" id="3.1.26.5"/>
    </reaction>
</comment>
<comment type="similarity">
    <text evidence="1">Belongs to the HARP family.</text>
</comment>
<organism>
    <name type="scientific">Thermococcus kodakarensis (strain ATCC BAA-918 / JCM 12380 / KOD1)</name>
    <name type="common">Pyrococcus kodakaraensis (strain KOD1)</name>
    <dbReference type="NCBI Taxonomy" id="69014"/>
    <lineage>
        <taxon>Archaea</taxon>
        <taxon>Methanobacteriati</taxon>
        <taxon>Methanobacteriota</taxon>
        <taxon>Thermococci</taxon>
        <taxon>Thermococcales</taxon>
        <taxon>Thermococcaceae</taxon>
        <taxon>Thermococcus</taxon>
    </lineage>
</organism>
<feature type="chain" id="PRO_0000366696" description="RNA-free ribonuclease P">
    <location>
        <begin position="1"/>
        <end position="198"/>
    </location>
</feature>
<name>RFRNP_THEKO</name>
<reference key="1">
    <citation type="journal article" date="2005" name="Genome Res.">
        <title>Complete genome sequence of the hyperthermophilic archaeon Thermococcus kodakaraensis KOD1 and comparison with Pyrococcus genomes.</title>
        <authorList>
            <person name="Fukui T."/>
            <person name="Atomi H."/>
            <person name="Kanai T."/>
            <person name="Matsumi R."/>
            <person name="Fujiwara S."/>
            <person name="Imanaka T."/>
        </authorList>
    </citation>
    <scope>NUCLEOTIDE SEQUENCE [LARGE SCALE GENOMIC DNA]</scope>
    <source>
        <strain>ATCC BAA-918 / JCM 12380 / KOD1</strain>
    </source>
</reference>
<gene>
    <name type="ordered locus">TK1425</name>
</gene>
<sequence length="198" mass="22949">MKFVLDTSIFVNPEVRKNFGDNPTEAMKTFLSYAEKLFGKVEFYMPPGIYREVMHFVDSEELRPAIELYIIKKPPNVHELKIPAFVVYELIEDIRRRIDKGLRVAEKAVRESVLDTDNVDNIIQKLRRNYRRALREGIVDSKEDFELILLAMELDATIVSADVGILTWAQKMGIKWVDSSVFREVLEGLVEKLEGKNL</sequence>